<organism>
    <name type="scientific">Caenorhabditis elegans</name>
    <dbReference type="NCBI Taxonomy" id="6239"/>
    <lineage>
        <taxon>Eukaryota</taxon>
        <taxon>Metazoa</taxon>
        <taxon>Ecdysozoa</taxon>
        <taxon>Nematoda</taxon>
        <taxon>Chromadorea</taxon>
        <taxon>Rhabditida</taxon>
        <taxon>Rhabditina</taxon>
        <taxon>Rhabditomorpha</taxon>
        <taxon>Rhabditoidea</taxon>
        <taxon>Rhabditidae</taxon>
        <taxon>Peloderinae</taxon>
        <taxon>Caenorhabditis</taxon>
    </lineage>
</organism>
<proteinExistence type="evidence at protein level"/>
<evidence type="ECO:0000250" key="1">
    <source>
        <dbReference type="UniProtKB" id="P11766"/>
    </source>
</evidence>
<evidence type="ECO:0000269" key="2">
    <source>
    </source>
</evidence>
<evidence type="ECO:0000305" key="3"/>
<evidence type="ECO:0000312" key="4">
    <source>
        <dbReference type="WormBase" id="H24K24.3a"/>
    </source>
</evidence>
<feature type="chain" id="PRO_0000160770" description="Alcohol dehydrogenase class-3">
    <location>
        <begin position="1"/>
        <end position="384"/>
    </location>
</feature>
<feature type="binding site" evidence="1">
    <location>
        <position position="48"/>
    </location>
    <ligand>
        <name>Zn(2+)</name>
        <dbReference type="ChEBI" id="CHEBI:29105"/>
        <label>1</label>
        <note>catalytic</note>
    </ligand>
</feature>
<feature type="binding site" evidence="1">
    <location>
        <position position="70"/>
    </location>
    <ligand>
        <name>Zn(2+)</name>
        <dbReference type="ChEBI" id="CHEBI:29105"/>
        <label>1</label>
        <note>catalytic</note>
    </ligand>
</feature>
<feature type="binding site" evidence="1">
    <location>
        <position position="100"/>
    </location>
    <ligand>
        <name>Zn(2+)</name>
        <dbReference type="ChEBI" id="CHEBI:29105"/>
        <label>2</label>
    </ligand>
</feature>
<feature type="binding site" evidence="1">
    <location>
        <position position="103"/>
    </location>
    <ligand>
        <name>Zn(2+)</name>
        <dbReference type="ChEBI" id="CHEBI:29105"/>
        <label>2</label>
    </ligand>
</feature>
<feature type="binding site" evidence="1">
    <location>
        <position position="106"/>
    </location>
    <ligand>
        <name>Zn(2+)</name>
        <dbReference type="ChEBI" id="CHEBI:29105"/>
        <label>2</label>
    </ligand>
</feature>
<feature type="binding site" evidence="1">
    <location>
        <position position="114"/>
    </location>
    <ligand>
        <name>Zn(2+)</name>
        <dbReference type="ChEBI" id="CHEBI:29105"/>
        <label>2</label>
    </ligand>
</feature>
<feature type="binding site" evidence="1">
    <location>
        <position position="177"/>
    </location>
    <ligand>
        <name>Zn(2+)</name>
        <dbReference type="ChEBI" id="CHEBI:29105"/>
        <label>1</label>
        <note>catalytic</note>
    </ligand>
</feature>
<feature type="splice variant" id="VSP_000208" description="In isoform b." evidence="3">
    <original>K</original>
    <variation>KFQ</variation>
    <location>
        <position position="41"/>
    </location>
</feature>
<feature type="mutagenesis site" description="In nu518; diminishes the calcium flux to the cytoplasm in the ASJ sensory neurons upon removal of a nitric oxide stimulus." evidence="2">
    <location>
        <begin position="120"/>
        <end position="384"/>
    </location>
</feature>
<sequence length="384" mass="41292">MSSTAGQVINCKAAVAWSAKAPLSIETIQVAPPKAHEVRVKILYTAVCHTDAYTLDGHDPEGLFPVVLGHEGSGIVESVGEGVTGFAPGDHVVPLYVPQCKECEYCKNPKTNLCQKIRISQGNGFMPDGSSRFTCNGKQLFHFMGCSTFSEYTVVADISLCKVNPEAPLEKVSLLGCGISTGYGAVLNTCKVEEGSTVAVWGLGAVGLAVIMGAKAAGAKKIVGIDLIESKFESAKFFGATECINPKSVELPEGKSFQAWLVEQFDGGFDYTFECIGNVHTMRQALEAAHKGWGVSCIIGVAGAGQEIATRPFQLVTGRTWKGTAFGGWKSVESVPRLVDDYMNKKLLIDEFITHRWNIDDINTAFDVLHKGESLRSVLAFEKI</sequence>
<comment type="function">
    <text evidence="1 2">Class-III ADH is remarkably ineffective in oxidizing ethanol, but it readily catalyzes the oxidation of long-chain primary alcohols and the oxidation of S-(hydroxymethyl) glutathione (By similarity). Plays a role in the calcium flux to the cytoplasm in the ASJ sensory neurons upon removal of a nitric oxide stimulus (PubMed:30014846).</text>
</comment>
<comment type="catalytic activity">
    <reaction evidence="1">
        <text>a primary alcohol + NAD(+) = an aldehyde + NADH + H(+)</text>
        <dbReference type="Rhea" id="RHEA:10736"/>
        <dbReference type="ChEBI" id="CHEBI:15378"/>
        <dbReference type="ChEBI" id="CHEBI:15734"/>
        <dbReference type="ChEBI" id="CHEBI:17478"/>
        <dbReference type="ChEBI" id="CHEBI:57540"/>
        <dbReference type="ChEBI" id="CHEBI:57945"/>
        <dbReference type="EC" id="1.1.1.1"/>
    </reaction>
</comment>
<comment type="catalytic activity">
    <reaction evidence="1">
        <text>a secondary alcohol + NAD(+) = a ketone + NADH + H(+)</text>
        <dbReference type="Rhea" id="RHEA:10740"/>
        <dbReference type="ChEBI" id="CHEBI:15378"/>
        <dbReference type="ChEBI" id="CHEBI:17087"/>
        <dbReference type="ChEBI" id="CHEBI:35681"/>
        <dbReference type="ChEBI" id="CHEBI:57540"/>
        <dbReference type="ChEBI" id="CHEBI:57945"/>
        <dbReference type="EC" id="1.1.1.1"/>
    </reaction>
</comment>
<comment type="catalytic activity">
    <reaction evidence="1">
        <text>S-(hydroxymethyl)glutathione + NADP(+) = S-formylglutathione + NADPH + H(+)</text>
        <dbReference type="Rhea" id="RHEA:19981"/>
        <dbReference type="ChEBI" id="CHEBI:15378"/>
        <dbReference type="ChEBI" id="CHEBI:57688"/>
        <dbReference type="ChEBI" id="CHEBI:57783"/>
        <dbReference type="ChEBI" id="CHEBI:58349"/>
        <dbReference type="ChEBI" id="CHEBI:58758"/>
        <dbReference type="EC" id="1.1.1.284"/>
    </reaction>
</comment>
<comment type="catalytic activity">
    <reaction evidence="1">
        <text>S-(hydroxymethyl)glutathione + NAD(+) = S-formylglutathione + NADH + H(+)</text>
        <dbReference type="Rhea" id="RHEA:19985"/>
        <dbReference type="ChEBI" id="CHEBI:15378"/>
        <dbReference type="ChEBI" id="CHEBI:57540"/>
        <dbReference type="ChEBI" id="CHEBI:57688"/>
        <dbReference type="ChEBI" id="CHEBI:57945"/>
        <dbReference type="ChEBI" id="CHEBI:58758"/>
        <dbReference type="EC" id="1.1.1.284"/>
    </reaction>
</comment>
<comment type="cofactor">
    <cofactor evidence="1">
        <name>Zn(2+)</name>
        <dbReference type="ChEBI" id="CHEBI:29105"/>
    </cofactor>
    <text evidence="1">Binds 2 Zn(2+) ions per subunit.</text>
</comment>
<comment type="subunit">
    <text evidence="1">Homodimer.</text>
</comment>
<comment type="subcellular location">
    <subcellularLocation>
        <location evidence="3">Cytoplasm</location>
    </subcellularLocation>
</comment>
<comment type="alternative products">
    <event type="alternative splicing"/>
    <isoform>
        <id>Q17335-1</id>
        <name>a</name>
        <sequence type="displayed"/>
    </isoform>
    <isoform>
        <id>Q17335-2</id>
        <name>b</name>
        <sequence type="described" ref="VSP_000208"/>
    </isoform>
</comment>
<comment type="similarity">
    <text evidence="3">Belongs to the zinc-containing alcohol dehydrogenase family. Class-III subfamily.</text>
</comment>
<gene>
    <name evidence="4" type="primary">adh-5</name>
    <name evidence="4" type="ORF">H24K24.3</name>
</gene>
<accession>Q17335</accession>
<accession>Q8WSP4</accession>
<reference key="1">
    <citation type="journal article" date="1995" name="J. Mol. Evol.">
        <title>Caenorhabditis elegans contains genes encoding two new members of the Zn-containing alcohol dehydrogenase family.</title>
        <authorList>
            <person name="Glasner J.D."/>
            <person name="Kocher T.D."/>
            <person name="Collins J.J."/>
        </authorList>
    </citation>
    <scope>NUCLEOTIDE SEQUENCE [MRNA] (ISOFORM A)</scope>
    <source>
        <strain>Bristol N2</strain>
    </source>
</reference>
<reference key="2">
    <citation type="journal article" date="1998" name="Science">
        <title>Genome sequence of the nematode C. elegans: a platform for investigating biology.</title>
        <authorList>
            <consortium name="The C. elegans sequencing consortium"/>
        </authorList>
    </citation>
    <scope>NUCLEOTIDE SEQUENCE [LARGE SCALE GENOMIC DNA]</scope>
    <scope>ALTERNATIVE SPLICING</scope>
    <source>
        <strain>Bristol N2</strain>
    </source>
</reference>
<reference key="3">
    <citation type="journal article" date="2018" name="Elife">
        <title>Thioredoxin shapes the C. elegans sensory response to Pseudomonas produced nitric oxide.</title>
        <authorList>
            <person name="Hao Y."/>
            <person name="Yang W."/>
            <person name="Ren J."/>
            <person name="Hall Q."/>
            <person name="Zhang Y."/>
            <person name="Kaplan J.M."/>
        </authorList>
    </citation>
    <scope>FUNCTION</scope>
    <scope>MUTAGENESIS OF 120-SER--ILE-384</scope>
</reference>
<name>ADHX_CAEEL</name>
<dbReference type="EC" id="1.1.1.1" evidence="1"/>
<dbReference type="EC" id="1.1.1.-"/>
<dbReference type="EC" id="1.1.1.284" evidence="1"/>
<dbReference type="EMBL" id="U18781">
    <property type="protein sequence ID" value="AAB03374.1"/>
    <property type="molecule type" value="mRNA"/>
</dbReference>
<dbReference type="EMBL" id="FO081563">
    <property type="protein sequence ID" value="CCD72435.1"/>
    <property type="molecule type" value="Genomic_DNA"/>
</dbReference>
<dbReference type="EMBL" id="FO081563">
    <property type="protein sequence ID" value="CCD72436.1"/>
    <property type="molecule type" value="Genomic_DNA"/>
</dbReference>
<dbReference type="RefSeq" id="NP_001024016.1">
    <molecule id="Q17335-2"/>
    <property type="nucleotide sequence ID" value="NM_001028845.4"/>
</dbReference>
<dbReference type="RefSeq" id="NP_741507.1">
    <molecule id="Q17335-1"/>
    <property type="nucleotide sequence ID" value="NM_171434.9"/>
</dbReference>
<dbReference type="SMR" id="Q17335"/>
<dbReference type="BioGRID" id="43670">
    <property type="interactions" value="30"/>
</dbReference>
<dbReference type="FunCoup" id="Q17335">
    <property type="interactions" value="2375"/>
</dbReference>
<dbReference type="STRING" id="6239.H24K24.3b.1"/>
<dbReference type="PaxDb" id="6239-H24K24.3b.1"/>
<dbReference type="PeptideAtlas" id="Q17335"/>
<dbReference type="EnsemblMetazoa" id="H24K24.3a.1">
    <molecule id="Q17335-1"/>
    <property type="protein sequence ID" value="H24K24.3a.1"/>
    <property type="gene ID" value="WBGene00019240"/>
</dbReference>
<dbReference type="EnsemblMetazoa" id="H24K24.3b.1">
    <molecule id="Q17335-2"/>
    <property type="protein sequence ID" value="H24K24.3b.1"/>
    <property type="gene ID" value="WBGene00019240"/>
</dbReference>
<dbReference type="GeneID" id="178597"/>
<dbReference type="KEGG" id="cel:CELE_H24K24.3"/>
<dbReference type="UCSC" id="H24K24.3a.1">
    <molecule id="Q17335-1"/>
    <property type="organism name" value="c. elegans"/>
</dbReference>
<dbReference type="AGR" id="WB:WBGene00019240"/>
<dbReference type="CTD" id="178597"/>
<dbReference type="WormBase" id="H24K24.3a">
    <molecule id="Q17335-1"/>
    <property type="protein sequence ID" value="CE23822"/>
    <property type="gene ID" value="WBGene00019240"/>
    <property type="gene designation" value="adh-5"/>
</dbReference>
<dbReference type="WormBase" id="H24K24.3b">
    <molecule id="Q17335-2"/>
    <property type="protein sequence ID" value="CE29978"/>
    <property type="gene ID" value="WBGene00019240"/>
    <property type="gene designation" value="adh-5"/>
</dbReference>
<dbReference type="eggNOG" id="KOG0022">
    <property type="taxonomic scope" value="Eukaryota"/>
</dbReference>
<dbReference type="GeneTree" id="ENSGT00940000164379"/>
<dbReference type="HOGENOM" id="CLU_026673_14_0_1"/>
<dbReference type="InParanoid" id="Q17335"/>
<dbReference type="OMA" id="IKGRSEM"/>
<dbReference type="OrthoDB" id="417550at2759"/>
<dbReference type="PhylomeDB" id="Q17335"/>
<dbReference type="Reactome" id="R-CEL-2161541">
    <property type="pathway name" value="Abacavir metabolism"/>
</dbReference>
<dbReference type="Reactome" id="R-CEL-5365859">
    <property type="pathway name" value="RA biosynthesis pathway"/>
</dbReference>
<dbReference type="Reactome" id="R-CEL-71384">
    <property type="pathway name" value="Ethanol oxidation"/>
</dbReference>
<dbReference type="PRO" id="PR:Q17335"/>
<dbReference type="Proteomes" id="UP000001940">
    <property type="component" value="Chromosome V"/>
</dbReference>
<dbReference type="Bgee" id="WBGene00019240">
    <property type="expression patterns" value="Expressed in adult organism and 4 other cell types or tissues"/>
</dbReference>
<dbReference type="GO" id="GO:0005737">
    <property type="term" value="C:cytoplasm"/>
    <property type="evidence" value="ECO:0000303"/>
    <property type="project" value="UniProtKB"/>
</dbReference>
<dbReference type="GO" id="GO:0005829">
    <property type="term" value="C:cytosol"/>
    <property type="evidence" value="ECO:0000318"/>
    <property type="project" value="GO_Central"/>
</dbReference>
<dbReference type="GO" id="GO:0004022">
    <property type="term" value="F:alcohol dehydrogenase (NAD+) activity"/>
    <property type="evidence" value="ECO:0000318"/>
    <property type="project" value="GO_Central"/>
</dbReference>
<dbReference type="GO" id="GO:0106322">
    <property type="term" value="F:S-(hydroxymethyl)glutathione dehydrogenase (NAD+) activity"/>
    <property type="evidence" value="ECO:0007669"/>
    <property type="project" value="RHEA"/>
</dbReference>
<dbReference type="GO" id="GO:0106321">
    <property type="term" value="F:S-(hydroxymethyl)glutathione dehydrogenase (NADP+) activity"/>
    <property type="evidence" value="ECO:0007669"/>
    <property type="project" value="RHEA"/>
</dbReference>
<dbReference type="GO" id="GO:0051903">
    <property type="term" value="F:S-(hydroxymethyl)glutathione dehydrogenase [NAD(P)+] activity"/>
    <property type="evidence" value="ECO:0000318"/>
    <property type="project" value="GO_Central"/>
</dbReference>
<dbReference type="GO" id="GO:0008270">
    <property type="term" value="F:zinc ion binding"/>
    <property type="evidence" value="ECO:0000318"/>
    <property type="project" value="GO_Central"/>
</dbReference>
<dbReference type="GO" id="GO:0006066">
    <property type="term" value="P:alcohol metabolic process"/>
    <property type="evidence" value="ECO:0000303"/>
    <property type="project" value="UniProtKB"/>
</dbReference>
<dbReference type="GO" id="GO:0046294">
    <property type="term" value="P:formaldehyde catabolic process"/>
    <property type="evidence" value="ECO:0000318"/>
    <property type="project" value="GO_Central"/>
</dbReference>
<dbReference type="CDD" id="cd08300">
    <property type="entry name" value="alcohol_DH_class_III"/>
    <property type="match status" value="1"/>
</dbReference>
<dbReference type="FunFam" id="3.40.50.720:FF:000003">
    <property type="entry name" value="S-(hydroxymethyl)glutathione dehydrogenase"/>
    <property type="match status" value="1"/>
</dbReference>
<dbReference type="FunFam" id="3.90.180.10:FF:000001">
    <property type="entry name" value="S-(hydroxymethyl)glutathione dehydrogenase"/>
    <property type="match status" value="1"/>
</dbReference>
<dbReference type="Gene3D" id="3.90.180.10">
    <property type="entry name" value="Medium-chain alcohol dehydrogenases, catalytic domain"/>
    <property type="match status" value="1"/>
</dbReference>
<dbReference type="Gene3D" id="3.40.50.720">
    <property type="entry name" value="NAD(P)-binding Rossmann-like Domain"/>
    <property type="match status" value="1"/>
</dbReference>
<dbReference type="InterPro" id="IPR013149">
    <property type="entry name" value="ADH-like_C"/>
</dbReference>
<dbReference type="InterPro" id="IPR013154">
    <property type="entry name" value="ADH-like_N"/>
</dbReference>
<dbReference type="InterPro" id="IPR014183">
    <property type="entry name" value="ADH_3"/>
</dbReference>
<dbReference type="InterPro" id="IPR002328">
    <property type="entry name" value="ADH_Zn_CS"/>
</dbReference>
<dbReference type="InterPro" id="IPR011032">
    <property type="entry name" value="GroES-like_sf"/>
</dbReference>
<dbReference type="InterPro" id="IPR036291">
    <property type="entry name" value="NAD(P)-bd_dom_sf"/>
</dbReference>
<dbReference type="NCBIfam" id="TIGR02818">
    <property type="entry name" value="adh_III_F_hyde"/>
    <property type="match status" value="1"/>
</dbReference>
<dbReference type="PANTHER" id="PTHR43880">
    <property type="entry name" value="ALCOHOL DEHYDROGENASE"/>
    <property type="match status" value="1"/>
</dbReference>
<dbReference type="PANTHER" id="PTHR43880:SF12">
    <property type="entry name" value="ALCOHOL DEHYDROGENASE CLASS-3"/>
    <property type="match status" value="1"/>
</dbReference>
<dbReference type="Pfam" id="PF08240">
    <property type="entry name" value="ADH_N"/>
    <property type="match status" value="1"/>
</dbReference>
<dbReference type="Pfam" id="PF00107">
    <property type="entry name" value="ADH_zinc_N"/>
    <property type="match status" value="1"/>
</dbReference>
<dbReference type="SUPFAM" id="SSF50129">
    <property type="entry name" value="GroES-like"/>
    <property type="match status" value="2"/>
</dbReference>
<dbReference type="SUPFAM" id="SSF51735">
    <property type="entry name" value="NAD(P)-binding Rossmann-fold domains"/>
    <property type="match status" value="1"/>
</dbReference>
<dbReference type="PROSITE" id="PS00059">
    <property type="entry name" value="ADH_ZINC"/>
    <property type="match status" value="1"/>
</dbReference>
<keyword id="KW-0025">Alternative splicing</keyword>
<keyword id="KW-0963">Cytoplasm</keyword>
<keyword id="KW-0479">Metal-binding</keyword>
<keyword id="KW-0520">NAD</keyword>
<keyword id="KW-0560">Oxidoreductase</keyword>
<keyword id="KW-1185">Reference proteome</keyword>
<keyword id="KW-0862">Zinc</keyword>
<protein>
    <recommendedName>
        <fullName>Alcohol dehydrogenase class-3</fullName>
        <ecNumber evidence="1">1.1.1.1</ecNumber>
    </recommendedName>
    <alternativeName>
        <fullName>Alcohol dehydrogenase class-III</fullName>
    </alternativeName>
    <alternativeName>
        <fullName evidence="4">Alcohol dehydrogenase homolog 5</fullName>
    </alternativeName>
    <alternativeName>
        <fullName>Glutathione-dependent formaldehyde dehydrogenase</fullName>
        <shortName>FALDH</shortName>
        <shortName>FDH</shortName>
        <shortName>GSH-FDH</shortName>
        <ecNumber>1.1.1.-</ecNumber>
    </alternativeName>
    <alternativeName>
        <fullName>S-(hydroxymethyl)glutathione dehydrogenase</fullName>
        <ecNumber evidence="1">1.1.1.284</ecNumber>
    </alternativeName>
</protein>